<evidence type="ECO:0000250" key="1">
    <source>
        <dbReference type="UniProtKB" id="P60660"/>
    </source>
</evidence>
<evidence type="ECO:0000250" key="2">
    <source>
        <dbReference type="UniProtKB" id="Q60605"/>
    </source>
</evidence>
<evidence type="ECO:0000255" key="3">
    <source>
        <dbReference type="PROSITE-ProRule" id="PRU00448"/>
    </source>
</evidence>
<evidence type="ECO:0000303" key="4">
    <source>
    </source>
</evidence>
<evidence type="ECO:0000305" key="5"/>
<protein>
    <recommendedName>
        <fullName>Myosin light polypeptide 6</fullName>
    </recommendedName>
    <alternativeName>
        <fullName>17 kDa myosin light chain</fullName>
        <shortName>LC17</shortName>
    </alternativeName>
    <alternativeName>
        <fullName>Myosin light chain 3</fullName>
        <shortName>MLC-3</shortName>
    </alternativeName>
    <alternativeName>
        <fullName>Myosin light chain alkali 3</fullName>
        <shortName>Myosin light chain A3</shortName>
    </alternativeName>
    <alternativeName>
        <fullName>Smooth muscle and nonmuscle myosin light chain alkali 6</fullName>
    </alternativeName>
</protein>
<organism>
    <name type="scientific">Sus scrofa</name>
    <name type="common">Pig</name>
    <dbReference type="NCBI Taxonomy" id="9823"/>
    <lineage>
        <taxon>Eukaryota</taxon>
        <taxon>Metazoa</taxon>
        <taxon>Chordata</taxon>
        <taxon>Craniata</taxon>
        <taxon>Vertebrata</taxon>
        <taxon>Euteleostomi</taxon>
        <taxon>Mammalia</taxon>
        <taxon>Eutheria</taxon>
        <taxon>Laurasiatheria</taxon>
        <taxon>Artiodactyla</taxon>
        <taxon>Suina</taxon>
        <taxon>Suidae</taxon>
        <taxon>Sus</taxon>
    </lineage>
</organism>
<comment type="function">
    <text>Regulatory light chain of myosin. Does not bind calcium.</text>
</comment>
<comment type="subunit">
    <text evidence="2">Myosin is a hexamer of 2 heavy chains and 4 light chains. Interacts with SPATA6.</text>
</comment>
<comment type="alternative products">
    <event type="alternative splicing"/>
    <isoform>
        <id>P60662-1</id>
        <id>P16475-1</id>
        <name>Non-muscle</name>
        <name>MLC3nm</name>
        <name>LC17A</name>
        <name>LC17-nm</name>
        <sequence type="displayed"/>
    </isoform>
    <isoform>
        <id>P60662-2</id>
        <id>P24572-1</id>
        <name>Smooth muscle</name>
        <name>MLC3sm</name>
        <name>LC17B</name>
        <name>LC17-sm</name>
        <sequence type="described" ref="VSP_009737"/>
    </isoform>
</comment>
<proteinExistence type="evidence at protein level"/>
<reference key="1">
    <citation type="journal article" date="1992" name="J. Biochem.">
        <title>Studies on amino acid sequences of two isoforms of 17-kDa essential light chain of smooth muscle myosin from porcine aorta media.</title>
        <authorList>
            <person name="Hasegawa Y."/>
            <person name="Ueda Y."/>
            <person name="Watanabe M."/>
            <person name="Morita F."/>
        </authorList>
    </citation>
    <scope>PROTEIN SEQUENCE (ISOFORMS NON-MUSCLE AND SMOOTH MUSCLE)</scope>
    <source>
        <tissue>Aorta</tissue>
    </source>
</reference>
<gene>
    <name type="primary">MYL6</name>
</gene>
<dbReference type="PIR" id="JX0214">
    <property type="entry name" value="JX0214"/>
</dbReference>
<dbReference type="PIR" id="JX0215">
    <property type="entry name" value="JX0215"/>
</dbReference>
<dbReference type="RefSeq" id="NP_001157469.1">
    <molecule id="P60662-1"/>
    <property type="nucleotide sequence ID" value="NM_001163997.1"/>
</dbReference>
<dbReference type="RefSeq" id="XP_005655646.1">
    <molecule id="P60662-2"/>
    <property type="nucleotide sequence ID" value="XM_005655589.3"/>
</dbReference>
<dbReference type="RefSeq" id="XP_005655689.1">
    <property type="nucleotide sequence ID" value="XM_005655632.2"/>
</dbReference>
<dbReference type="RefSeq" id="XP_013843762.1">
    <property type="nucleotide sequence ID" value="XM_013988308.1"/>
</dbReference>
<dbReference type="SMR" id="P60662"/>
<dbReference type="FunCoup" id="P60662">
    <property type="interactions" value="1302"/>
</dbReference>
<dbReference type="STRING" id="9823.ENSSSCP00000060677"/>
<dbReference type="PaxDb" id="9823-ENSSSCP00000000402"/>
<dbReference type="PeptideAtlas" id="P60662"/>
<dbReference type="Ensembl" id="ENSSSCT00015090225.1">
    <molecule id="P60662-1"/>
    <property type="protein sequence ID" value="ENSSSCP00015036884.1"/>
    <property type="gene ID" value="ENSSSCG00015066226.1"/>
</dbReference>
<dbReference type="Ensembl" id="ENSSSCT00045031659.1">
    <molecule id="P60662-1"/>
    <property type="protein sequence ID" value="ENSSSCP00045021919.1"/>
    <property type="gene ID" value="ENSSSCG00045018573.1"/>
</dbReference>
<dbReference type="Ensembl" id="ENSSSCT00055014064.1">
    <molecule id="P60662-2"/>
    <property type="protein sequence ID" value="ENSSSCP00055011063.1"/>
    <property type="gene ID" value="ENSSSCG00055006918.1"/>
</dbReference>
<dbReference type="Ensembl" id="ENSSSCT00065073327.1">
    <molecule id="P60662-1"/>
    <property type="protein sequence ID" value="ENSSSCP00065031944.1"/>
    <property type="gene ID" value="ENSSSCG00065053463.1"/>
</dbReference>
<dbReference type="Ensembl" id="ENSSSCT00110071600">
    <molecule id="P60662-1"/>
    <property type="protein sequence ID" value="ENSSSCP00110050379"/>
    <property type="gene ID" value="ENSSSCG00110037642"/>
</dbReference>
<dbReference type="GeneID" id="396807"/>
<dbReference type="KEGG" id="ssc:396807"/>
<dbReference type="CTD" id="4637"/>
<dbReference type="eggNOG" id="KOG0030">
    <property type="taxonomic scope" value="Eukaryota"/>
</dbReference>
<dbReference type="HOGENOM" id="CLU_061288_13_0_1"/>
<dbReference type="InParanoid" id="P60662"/>
<dbReference type="OrthoDB" id="5959761at2759"/>
<dbReference type="TreeFam" id="TF351553"/>
<dbReference type="Reactome" id="R-SSC-445355">
    <property type="pathway name" value="Smooth Muscle Contraction"/>
</dbReference>
<dbReference type="Reactome" id="R-SSC-5627123">
    <property type="pathway name" value="RHO GTPases activate PAKs"/>
</dbReference>
<dbReference type="Proteomes" id="UP000008227">
    <property type="component" value="Unplaced"/>
</dbReference>
<dbReference type="Proteomes" id="UP000314985">
    <property type="component" value="Unplaced"/>
</dbReference>
<dbReference type="Proteomes" id="UP000694570">
    <property type="component" value="Unplaced"/>
</dbReference>
<dbReference type="Proteomes" id="UP000694571">
    <property type="component" value="Unplaced"/>
</dbReference>
<dbReference type="Proteomes" id="UP000694720">
    <property type="component" value="Unplaced"/>
</dbReference>
<dbReference type="Proteomes" id="UP000694722">
    <property type="component" value="Unplaced"/>
</dbReference>
<dbReference type="Proteomes" id="UP000694723">
    <property type="component" value="Unplaced"/>
</dbReference>
<dbReference type="Proteomes" id="UP000694724">
    <property type="component" value="Unplaced"/>
</dbReference>
<dbReference type="Proteomes" id="UP000694725">
    <property type="component" value="Unplaced"/>
</dbReference>
<dbReference type="Proteomes" id="UP000694726">
    <property type="component" value="Unplaced"/>
</dbReference>
<dbReference type="Proteomes" id="UP000694727">
    <property type="component" value="Unplaced"/>
</dbReference>
<dbReference type="Proteomes" id="UP000694728">
    <property type="component" value="Unplaced"/>
</dbReference>
<dbReference type="GO" id="GO:0016460">
    <property type="term" value="C:myosin II complex"/>
    <property type="evidence" value="ECO:0000318"/>
    <property type="project" value="GO_Central"/>
</dbReference>
<dbReference type="GO" id="GO:0005509">
    <property type="term" value="F:calcium ion binding"/>
    <property type="evidence" value="ECO:0007669"/>
    <property type="project" value="InterPro"/>
</dbReference>
<dbReference type="GO" id="GO:0000146">
    <property type="term" value="F:microfilament motor activity"/>
    <property type="evidence" value="ECO:0000314"/>
    <property type="project" value="HGNC-UCL"/>
</dbReference>
<dbReference type="GO" id="GO:0008307">
    <property type="term" value="F:structural constituent of muscle"/>
    <property type="evidence" value="ECO:0000314"/>
    <property type="project" value="HGNC-UCL"/>
</dbReference>
<dbReference type="GO" id="GO:0006936">
    <property type="term" value="P:muscle contraction"/>
    <property type="evidence" value="ECO:0000305"/>
    <property type="project" value="HGNC-UCL"/>
</dbReference>
<dbReference type="GO" id="GO:0030049">
    <property type="term" value="P:muscle filament sliding"/>
    <property type="evidence" value="ECO:0000305"/>
    <property type="project" value="HGNC-UCL"/>
</dbReference>
<dbReference type="CDD" id="cd00051">
    <property type="entry name" value="EFh"/>
    <property type="match status" value="1"/>
</dbReference>
<dbReference type="FunFam" id="1.10.238.10:FF:000019">
    <property type="entry name" value="Myosin light chain 1 skeletal"/>
    <property type="match status" value="1"/>
</dbReference>
<dbReference type="FunFam" id="1.10.238.10:FF:000056">
    <property type="entry name" value="Myosin light chain 1 skeletal"/>
    <property type="match status" value="1"/>
</dbReference>
<dbReference type="Gene3D" id="1.10.238.10">
    <property type="entry name" value="EF-hand"/>
    <property type="match status" value="2"/>
</dbReference>
<dbReference type="InterPro" id="IPR050230">
    <property type="entry name" value="CALM/Myosin/TropC-like"/>
</dbReference>
<dbReference type="InterPro" id="IPR011992">
    <property type="entry name" value="EF-hand-dom_pair"/>
</dbReference>
<dbReference type="InterPro" id="IPR002048">
    <property type="entry name" value="EF_hand_dom"/>
</dbReference>
<dbReference type="PANTHER" id="PTHR23048">
    <property type="entry name" value="MYOSIN LIGHT CHAIN 1, 3"/>
    <property type="match status" value="1"/>
</dbReference>
<dbReference type="PANTHER" id="PTHR23048:SF43">
    <property type="entry name" value="MYOSIN LIGHT POLYPEPTIDE 6"/>
    <property type="match status" value="1"/>
</dbReference>
<dbReference type="SMART" id="SM00054">
    <property type="entry name" value="EFh"/>
    <property type="match status" value="2"/>
</dbReference>
<dbReference type="SUPFAM" id="SSF47473">
    <property type="entry name" value="EF-hand"/>
    <property type="match status" value="1"/>
</dbReference>
<dbReference type="PROSITE" id="PS50222">
    <property type="entry name" value="EF_HAND_2"/>
    <property type="match status" value="2"/>
</dbReference>
<accession>P60662</accession>
<accession>P16475</accession>
<accession>P24572</accession>
<accession>P24573</accession>
<accession>Q12790</accession>
<name>MYL6_PIG</name>
<sequence>MCDFTEDQTAEFKEAFQLFDRTGDGKILYSQCGDVMRALGQNPTNAEVLKVLGNPKSDEMNVKVLDFEHFLPMLQTVAKNKDQGTYEDYVEGLRVFDKEGNGTVMGAEIRHVLVTLGEKMTEEEVEMLVAGHEDSNGCINYEAFVRHILSG</sequence>
<feature type="initiator methionine" description="Removed" evidence="1">
    <location>
        <position position="1"/>
    </location>
</feature>
<feature type="chain" id="PRO_0000198692" description="Myosin light polypeptide 6">
    <location>
        <begin position="2"/>
        <end position="151"/>
    </location>
</feature>
<feature type="domain" description="EF-hand 1" evidence="3">
    <location>
        <begin position="7"/>
        <end position="42"/>
    </location>
</feature>
<feature type="domain" description="EF-hand 2" evidence="3">
    <location>
        <begin position="84"/>
        <end position="119"/>
    </location>
</feature>
<feature type="domain" description="EF-hand 3" evidence="5">
    <location>
        <begin position="119"/>
        <end position="151"/>
    </location>
</feature>
<feature type="modified residue" description="N-acetylcysteine" evidence="1">
    <location>
        <position position="2"/>
    </location>
</feature>
<feature type="modified residue" description="Phosphoserine" evidence="1">
    <location>
        <position position="57"/>
    </location>
</feature>
<feature type="modified residue" description="N6-acetyllysine" evidence="1">
    <location>
        <position position="81"/>
    </location>
</feature>
<feature type="splice variant" id="VSP_009737" description="In isoform Smooth muscle." evidence="4">
    <original>AFVRHILSG</original>
    <variation>ELVRMVLNG</variation>
    <location>
        <begin position="143"/>
        <end position="151"/>
    </location>
</feature>
<keyword id="KW-0007">Acetylation</keyword>
<keyword id="KW-0025">Alternative splicing</keyword>
<keyword id="KW-0903">Direct protein sequencing</keyword>
<keyword id="KW-0505">Motor protein</keyword>
<keyword id="KW-0514">Muscle protein</keyword>
<keyword id="KW-0518">Myosin</keyword>
<keyword id="KW-0597">Phosphoprotein</keyword>
<keyword id="KW-1185">Reference proteome</keyword>
<keyword id="KW-0677">Repeat</keyword>